<keyword id="KW-0520">NAD</keyword>
<keyword id="KW-0560">Oxidoreductase</keyword>
<sequence length="372" mass="40234">MLVAVVKELKQGEGRVACTPENVRKLTDAGHKVIVEKNAGIGSGFSNDMYEKEGAKIVTHEQAWEADLVIKVKEPHESEYQYFKKNQIIWGFLHLASSKEIVEKMQEVGVTAISGETIIKNGKAELLAPMSAIAGQRSAIMGAYYSEAQHGGQGTLVTGVHENVDIPGSTYVIFGGGVAATNAANVALGLNAKVIIIELNDDRIKYLQDMYAEKDVTVVKSTPENLAEQIKKADVFISTILIPGAKPPKLVTREMVKSMKKGSVLIDIAIDQGGTIETIRPTTISDPVYEEEGVIHYGVPNQPGAVPRTSTMALAQGNIDYILEICDKGLEQAIKDNEALSTGVNIYQGQVTNQGLASSHDLDYKEILNVIE</sequence>
<dbReference type="EC" id="1.4.1.1"/>
<dbReference type="EMBL" id="BX571857">
    <property type="protein sequence ID" value="CAG43158.1"/>
    <property type="molecule type" value="Genomic_DNA"/>
</dbReference>
<dbReference type="SMR" id="Q6G9C3"/>
<dbReference type="KEGG" id="sas:SAS1382"/>
<dbReference type="HOGENOM" id="CLU_003376_3_0_9"/>
<dbReference type="UniPathway" id="UPA00527">
    <property type="reaction ID" value="UER00585"/>
</dbReference>
<dbReference type="GO" id="GO:0005886">
    <property type="term" value="C:plasma membrane"/>
    <property type="evidence" value="ECO:0007669"/>
    <property type="project" value="TreeGrafter"/>
</dbReference>
<dbReference type="GO" id="GO:0000286">
    <property type="term" value="F:alanine dehydrogenase activity"/>
    <property type="evidence" value="ECO:0007669"/>
    <property type="project" value="UniProtKB-EC"/>
</dbReference>
<dbReference type="GO" id="GO:0042853">
    <property type="term" value="P:L-alanine catabolic process"/>
    <property type="evidence" value="ECO:0007669"/>
    <property type="project" value="UniProtKB-UniPathway"/>
</dbReference>
<dbReference type="CDD" id="cd05305">
    <property type="entry name" value="L-AlaDH"/>
    <property type="match status" value="1"/>
</dbReference>
<dbReference type="FunFam" id="3.40.50.720:FF:000433">
    <property type="entry name" value="Alanine dehydrogenase 1"/>
    <property type="match status" value="1"/>
</dbReference>
<dbReference type="Gene3D" id="3.40.50.720">
    <property type="entry name" value="NAD(P)-binding Rossmann-like Domain"/>
    <property type="match status" value="2"/>
</dbReference>
<dbReference type="InterPro" id="IPR008141">
    <property type="entry name" value="Ala_DH"/>
</dbReference>
<dbReference type="InterPro" id="IPR008143">
    <property type="entry name" value="Ala_DH/PNT_CS2"/>
</dbReference>
<dbReference type="InterPro" id="IPR008142">
    <property type="entry name" value="AlaDH/PNT_CS1"/>
</dbReference>
<dbReference type="InterPro" id="IPR007886">
    <property type="entry name" value="AlaDH/PNT_N"/>
</dbReference>
<dbReference type="InterPro" id="IPR007698">
    <property type="entry name" value="AlaDH/PNT_NAD(H)-bd"/>
</dbReference>
<dbReference type="InterPro" id="IPR036291">
    <property type="entry name" value="NAD(P)-bd_dom_sf"/>
</dbReference>
<dbReference type="NCBIfam" id="TIGR00518">
    <property type="entry name" value="alaDH"/>
    <property type="match status" value="1"/>
</dbReference>
<dbReference type="PANTHER" id="PTHR42795">
    <property type="entry name" value="ALANINE DEHYDROGENASE"/>
    <property type="match status" value="1"/>
</dbReference>
<dbReference type="PANTHER" id="PTHR42795:SF1">
    <property type="entry name" value="ALANINE DEHYDROGENASE"/>
    <property type="match status" value="1"/>
</dbReference>
<dbReference type="Pfam" id="PF01262">
    <property type="entry name" value="AlaDh_PNT_C"/>
    <property type="match status" value="1"/>
</dbReference>
<dbReference type="Pfam" id="PF05222">
    <property type="entry name" value="AlaDh_PNT_N"/>
    <property type="match status" value="1"/>
</dbReference>
<dbReference type="PIRSF" id="PIRSF000183">
    <property type="entry name" value="Alanine_dh"/>
    <property type="match status" value="1"/>
</dbReference>
<dbReference type="SMART" id="SM01002">
    <property type="entry name" value="AlaDh_PNT_C"/>
    <property type="match status" value="1"/>
</dbReference>
<dbReference type="SMART" id="SM01003">
    <property type="entry name" value="AlaDh_PNT_N"/>
    <property type="match status" value="1"/>
</dbReference>
<dbReference type="SUPFAM" id="SSF52283">
    <property type="entry name" value="Formate/glycerate dehydrogenase catalytic domain-like"/>
    <property type="match status" value="1"/>
</dbReference>
<dbReference type="SUPFAM" id="SSF51735">
    <property type="entry name" value="NAD(P)-binding Rossmann-fold domains"/>
    <property type="match status" value="1"/>
</dbReference>
<dbReference type="PROSITE" id="PS00836">
    <property type="entry name" value="ALADH_PNT_1"/>
    <property type="match status" value="1"/>
</dbReference>
<dbReference type="PROSITE" id="PS00837">
    <property type="entry name" value="ALADH_PNT_2"/>
    <property type="match status" value="1"/>
</dbReference>
<accession>Q6G9C3</accession>
<organism>
    <name type="scientific">Staphylococcus aureus (strain MSSA476)</name>
    <dbReference type="NCBI Taxonomy" id="282459"/>
    <lineage>
        <taxon>Bacteria</taxon>
        <taxon>Bacillati</taxon>
        <taxon>Bacillota</taxon>
        <taxon>Bacilli</taxon>
        <taxon>Bacillales</taxon>
        <taxon>Staphylococcaceae</taxon>
        <taxon>Staphylococcus</taxon>
    </lineage>
</organism>
<evidence type="ECO:0000250" key="1"/>
<evidence type="ECO:0000255" key="2"/>
<evidence type="ECO:0000305" key="3"/>
<name>DHA1_STAAS</name>
<comment type="function">
    <text evidence="1">May play a role in cell wall synthesis as L-alanine is an important constituent of the peptidoglycan layer.</text>
</comment>
<comment type="catalytic activity">
    <reaction>
        <text>L-alanine + NAD(+) + H2O = pyruvate + NH4(+) + NADH + H(+)</text>
        <dbReference type="Rhea" id="RHEA:18405"/>
        <dbReference type="ChEBI" id="CHEBI:15361"/>
        <dbReference type="ChEBI" id="CHEBI:15377"/>
        <dbReference type="ChEBI" id="CHEBI:15378"/>
        <dbReference type="ChEBI" id="CHEBI:28938"/>
        <dbReference type="ChEBI" id="CHEBI:57540"/>
        <dbReference type="ChEBI" id="CHEBI:57945"/>
        <dbReference type="ChEBI" id="CHEBI:57972"/>
        <dbReference type="EC" id="1.4.1.1"/>
    </reaction>
</comment>
<comment type="pathway">
    <text>Amino-acid degradation; L-alanine degradation via dehydrogenase pathway; NH(3) and pyruvate from L-alanine: step 1/1.</text>
</comment>
<comment type="similarity">
    <text evidence="3">Belongs to the AlaDH/PNT family.</text>
</comment>
<feature type="chain" id="PRO_0000198999" description="Alanine dehydrogenase 1">
    <location>
        <begin position="1"/>
        <end position="372"/>
    </location>
</feature>
<feature type="active site" evidence="2">
    <location>
        <position position="94"/>
    </location>
</feature>
<feature type="binding site" evidence="1">
    <location>
        <begin position="170"/>
        <end position="200"/>
    </location>
    <ligand>
        <name>NAD(+)</name>
        <dbReference type="ChEBI" id="CHEBI:57540"/>
    </ligand>
</feature>
<reference key="1">
    <citation type="journal article" date="2004" name="Proc. Natl. Acad. Sci. U.S.A.">
        <title>Complete genomes of two clinical Staphylococcus aureus strains: evidence for the rapid evolution of virulence and drug resistance.</title>
        <authorList>
            <person name="Holden M.T.G."/>
            <person name="Feil E.J."/>
            <person name="Lindsay J.A."/>
            <person name="Peacock S.J."/>
            <person name="Day N.P.J."/>
            <person name="Enright M.C."/>
            <person name="Foster T.J."/>
            <person name="Moore C.E."/>
            <person name="Hurst L."/>
            <person name="Atkin R."/>
            <person name="Barron A."/>
            <person name="Bason N."/>
            <person name="Bentley S.D."/>
            <person name="Chillingworth C."/>
            <person name="Chillingworth T."/>
            <person name="Churcher C."/>
            <person name="Clark L."/>
            <person name="Corton C."/>
            <person name="Cronin A."/>
            <person name="Doggett J."/>
            <person name="Dowd L."/>
            <person name="Feltwell T."/>
            <person name="Hance Z."/>
            <person name="Harris B."/>
            <person name="Hauser H."/>
            <person name="Holroyd S."/>
            <person name="Jagels K."/>
            <person name="James K.D."/>
            <person name="Lennard N."/>
            <person name="Line A."/>
            <person name="Mayes R."/>
            <person name="Moule S."/>
            <person name="Mungall K."/>
            <person name="Ormond D."/>
            <person name="Quail M.A."/>
            <person name="Rabbinowitsch E."/>
            <person name="Rutherford K.M."/>
            <person name="Sanders M."/>
            <person name="Sharp S."/>
            <person name="Simmonds M."/>
            <person name="Stevens K."/>
            <person name="Whitehead S."/>
            <person name="Barrell B.G."/>
            <person name="Spratt B.G."/>
            <person name="Parkhill J."/>
        </authorList>
    </citation>
    <scope>NUCLEOTIDE SEQUENCE [LARGE SCALE GENOMIC DNA]</scope>
    <source>
        <strain>MSSA476</strain>
    </source>
</reference>
<proteinExistence type="inferred from homology"/>
<protein>
    <recommendedName>
        <fullName>Alanine dehydrogenase 1</fullName>
        <ecNumber>1.4.1.1</ecNumber>
    </recommendedName>
</protein>
<gene>
    <name type="primary">ald1</name>
    <name type="ordered locus">SAS1382</name>
</gene>